<gene>
    <name evidence="1" type="primary">purQ</name>
    <name type="ordered locus">Rv0788</name>
    <name type="ORF">MTCY369.32</name>
</gene>
<sequence length="224" mass="23633">MTARIGVVTFPGTLDDVDAARAARQVGAEVVSLWHADADLKGVDAVVVPGGFSYGDYLRAGAIARFAPVMDEVVAAADRGMPVLGICNGFQVLCEAGLLPGALTRNVGLHFICRDVWLRVASTSTAWTSRFEPDADLLVPLKSGEGRYVAPEKVLDELEGEGRVVFRYHDNVNGSLRDIAGICSANGRVVGLMPHPEHAIEALTGPSDDGLGLFYSALDAVLTG</sequence>
<proteinExistence type="evidence at protein level"/>
<organism>
    <name type="scientific">Mycobacterium tuberculosis (strain ATCC 25618 / H37Rv)</name>
    <dbReference type="NCBI Taxonomy" id="83332"/>
    <lineage>
        <taxon>Bacteria</taxon>
        <taxon>Bacillati</taxon>
        <taxon>Actinomycetota</taxon>
        <taxon>Actinomycetes</taxon>
        <taxon>Mycobacteriales</taxon>
        <taxon>Mycobacteriaceae</taxon>
        <taxon>Mycobacterium</taxon>
        <taxon>Mycobacterium tuberculosis complex</taxon>
    </lineage>
</organism>
<name>PURQ_MYCTU</name>
<protein>
    <recommendedName>
        <fullName evidence="1">Phosphoribosylformylglycinamidine synthase subunit PurQ</fullName>
        <shortName evidence="1">FGAM synthase</shortName>
        <ecNumber evidence="1">6.3.5.3</ecNumber>
    </recommendedName>
    <alternativeName>
        <fullName evidence="1">Formylglycinamide ribonucleotide amidotransferase subunit I</fullName>
        <shortName evidence="1">FGAR amidotransferase I</shortName>
        <shortName evidence="1">FGAR-AT I</shortName>
    </alternativeName>
    <alternativeName>
        <fullName evidence="1">Glutaminase PurQ</fullName>
        <ecNumber evidence="1">3.5.1.2</ecNumber>
    </alternativeName>
    <alternativeName>
        <fullName evidence="1">Phosphoribosylformylglycinamidine synthase subunit I</fullName>
    </alternativeName>
</protein>
<keyword id="KW-0067">ATP-binding</keyword>
<keyword id="KW-0963">Cytoplasm</keyword>
<keyword id="KW-0315">Glutamine amidotransferase</keyword>
<keyword id="KW-0378">Hydrolase</keyword>
<keyword id="KW-0436">Ligase</keyword>
<keyword id="KW-0547">Nucleotide-binding</keyword>
<keyword id="KW-0658">Purine biosynthesis</keyword>
<keyword id="KW-1185">Reference proteome</keyword>
<reference key="1">
    <citation type="journal article" date="1998" name="Nature">
        <title>Deciphering the biology of Mycobacterium tuberculosis from the complete genome sequence.</title>
        <authorList>
            <person name="Cole S.T."/>
            <person name="Brosch R."/>
            <person name="Parkhill J."/>
            <person name="Garnier T."/>
            <person name="Churcher C.M."/>
            <person name="Harris D.E."/>
            <person name="Gordon S.V."/>
            <person name="Eiglmeier K."/>
            <person name="Gas S."/>
            <person name="Barry C.E. III"/>
            <person name="Tekaia F."/>
            <person name="Badcock K."/>
            <person name="Basham D."/>
            <person name="Brown D."/>
            <person name="Chillingworth T."/>
            <person name="Connor R."/>
            <person name="Davies R.M."/>
            <person name="Devlin K."/>
            <person name="Feltwell T."/>
            <person name="Gentles S."/>
            <person name="Hamlin N."/>
            <person name="Holroyd S."/>
            <person name="Hornsby T."/>
            <person name="Jagels K."/>
            <person name="Krogh A."/>
            <person name="McLean J."/>
            <person name="Moule S."/>
            <person name="Murphy L.D."/>
            <person name="Oliver S."/>
            <person name="Osborne J."/>
            <person name="Quail M.A."/>
            <person name="Rajandream M.A."/>
            <person name="Rogers J."/>
            <person name="Rutter S."/>
            <person name="Seeger K."/>
            <person name="Skelton S."/>
            <person name="Squares S."/>
            <person name="Squares R."/>
            <person name="Sulston J.E."/>
            <person name="Taylor K."/>
            <person name="Whitehead S."/>
            <person name="Barrell B.G."/>
        </authorList>
    </citation>
    <scope>NUCLEOTIDE SEQUENCE [LARGE SCALE GENOMIC DNA]</scope>
    <source>
        <strain>ATCC 25618 / H37Rv</strain>
    </source>
</reference>
<reference key="2">
    <citation type="journal article" date="2011" name="Mol. Cell. Proteomics">
        <title>Proteogenomic analysis of Mycobacterium tuberculosis by high resolution mass spectrometry.</title>
        <authorList>
            <person name="Kelkar D.S."/>
            <person name="Kumar D."/>
            <person name="Kumar P."/>
            <person name="Balakrishnan L."/>
            <person name="Muthusamy B."/>
            <person name="Yadav A.K."/>
            <person name="Shrivastava P."/>
            <person name="Marimuthu A."/>
            <person name="Anand S."/>
            <person name="Sundaram H."/>
            <person name="Kingsbury R."/>
            <person name="Harsha H.C."/>
            <person name="Nair B."/>
            <person name="Prasad T.S."/>
            <person name="Chauhan D.S."/>
            <person name="Katoch K."/>
            <person name="Katoch V.M."/>
            <person name="Kumar P."/>
            <person name="Chaerkady R."/>
            <person name="Ramachandran S."/>
            <person name="Dash D."/>
            <person name="Pandey A."/>
        </authorList>
    </citation>
    <scope>IDENTIFICATION BY MASS SPECTROMETRY [LARGE SCALE ANALYSIS]</scope>
    <source>
        <strain>ATCC 25618 / H37Rv</strain>
    </source>
</reference>
<feature type="chain" id="PRO_0000100572" description="Phosphoribosylformylglycinamidine synthase subunit PurQ">
    <location>
        <begin position="1"/>
        <end position="224"/>
    </location>
</feature>
<feature type="domain" description="Glutamine amidotransferase type-1" evidence="1">
    <location>
        <begin position="4"/>
        <end position="224"/>
    </location>
</feature>
<feature type="active site" description="Nucleophile" evidence="1">
    <location>
        <position position="87"/>
    </location>
</feature>
<feature type="active site" evidence="1">
    <location>
        <position position="195"/>
    </location>
</feature>
<feature type="active site" evidence="1">
    <location>
        <position position="197"/>
    </location>
</feature>
<dbReference type="EC" id="6.3.5.3" evidence="1"/>
<dbReference type="EC" id="3.5.1.2" evidence="1"/>
<dbReference type="EMBL" id="AL123456">
    <property type="protein sequence ID" value="CCP43536.1"/>
    <property type="molecule type" value="Genomic_DNA"/>
</dbReference>
<dbReference type="PIR" id="G70709">
    <property type="entry name" value="G70709"/>
</dbReference>
<dbReference type="RefSeq" id="NP_215303.1">
    <property type="nucleotide sequence ID" value="NC_000962.3"/>
</dbReference>
<dbReference type="RefSeq" id="WP_003403995.1">
    <property type="nucleotide sequence ID" value="NZ_NVQJ01000035.1"/>
</dbReference>
<dbReference type="SMR" id="P9WHL5"/>
<dbReference type="FunCoup" id="P9WHL5">
    <property type="interactions" value="42"/>
</dbReference>
<dbReference type="STRING" id="83332.Rv0788"/>
<dbReference type="PaxDb" id="83332-Rv0788"/>
<dbReference type="DNASU" id="885181"/>
<dbReference type="GeneID" id="885181"/>
<dbReference type="KEGG" id="mtu:Rv0788"/>
<dbReference type="KEGG" id="mtv:RVBD_0788"/>
<dbReference type="TubercuList" id="Rv0788"/>
<dbReference type="eggNOG" id="COG0047">
    <property type="taxonomic scope" value="Bacteria"/>
</dbReference>
<dbReference type="InParanoid" id="P9WHL5"/>
<dbReference type="OrthoDB" id="9804441at2"/>
<dbReference type="PhylomeDB" id="P9WHL5"/>
<dbReference type="UniPathway" id="UPA00074">
    <property type="reaction ID" value="UER00128"/>
</dbReference>
<dbReference type="Proteomes" id="UP000001584">
    <property type="component" value="Chromosome"/>
</dbReference>
<dbReference type="GO" id="GO:0005737">
    <property type="term" value="C:cytoplasm"/>
    <property type="evidence" value="ECO:0007669"/>
    <property type="project" value="UniProtKB-SubCell"/>
</dbReference>
<dbReference type="GO" id="GO:0005886">
    <property type="term" value="C:plasma membrane"/>
    <property type="evidence" value="ECO:0007005"/>
    <property type="project" value="MTBBASE"/>
</dbReference>
<dbReference type="GO" id="GO:0005524">
    <property type="term" value="F:ATP binding"/>
    <property type="evidence" value="ECO:0007669"/>
    <property type="project" value="UniProtKB-KW"/>
</dbReference>
<dbReference type="GO" id="GO:0004359">
    <property type="term" value="F:glutaminase activity"/>
    <property type="evidence" value="ECO:0007669"/>
    <property type="project" value="UniProtKB-EC"/>
</dbReference>
<dbReference type="GO" id="GO:0004642">
    <property type="term" value="F:phosphoribosylformylglycinamidine synthase activity"/>
    <property type="evidence" value="ECO:0007669"/>
    <property type="project" value="UniProtKB-UniRule"/>
</dbReference>
<dbReference type="GO" id="GO:0006189">
    <property type="term" value="P:'de novo' IMP biosynthetic process"/>
    <property type="evidence" value="ECO:0007669"/>
    <property type="project" value="UniProtKB-UniRule"/>
</dbReference>
<dbReference type="CDD" id="cd01740">
    <property type="entry name" value="GATase1_FGAR_AT"/>
    <property type="match status" value="1"/>
</dbReference>
<dbReference type="FunFam" id="3.40.50.880:FF:000019">
    <property type="entry name" value="Phosphoribosylformylglycinamidine synthase subunit PurQ"/>
    <property type="match status" value="1"/>
</dbReference>
<dbReference type="Gene3D" id="3.40.50.880">
    <property type="match status" value="1"/>
</dbReference>
<dbReference type="HAMAP" id="MF_00421">
    <property type="entry name" value="PurQ"/>
    <property type="match status" value="1"/>
</dbReference>
<dbReference type="InterPro" id="IPR029062">
    <property type="entry name" value="Class_I_gatase-like"/>
</dbReference>
<dbReference type="InterPro" id="IPR010075">
    <property type="entry name" value="PRibForGlyAmidine_synth_PurQ"/>
</dbReference>
<dbReference type="NCBIfam" id="TIGR01737">
    <property type="entry name" value="FGAM_synth_I"/>
    <property type="match status" value="1"/>
</dbReference>
<dbReference type="NCBIfam" id="NF002957">
    <property type="entry name" value="PRK03619.1"/>
    <property type="match status" value="1"/>
</dbReference>
<dbReference type="PANTHER" id="PTHR47552">
    <property type="entry name" value="PHOSPHORIBOSYLFORMYLGLYCINAMIDINE SYNTHASE SUBUNIT PURQ"/>
    <property type="match status" value="1"/>
</dbReference>
<dbReference type="PANTHER" id="PTHR47552:SF1">
    <property type="entry name" value="PHOSPHORIBOSYLFORMYLGLYCINAMIDINE SYNTHASE SUBUNIT PURQ"/>
    <property type="match status" value="1"/>
</dbReference>
<dbReference type="Pfam" id="PF13507">
    <property type="entry name" value="GATase_5"/>
    <property type="match status" value="1"/>
</dbReference>
<dbReference type="PIRSF" id="PIRSF001586">
    <property type="entry name" value="FGAM_synth_I"/>
    <property type="match status" value="1"/>
</dbReference>
<dbReference type="SMART" id="SM01211">
    <property type="entry name" value="GATase_5"/>
    <property type="match status" value="1"/>
</dbReference>
<dbReference type="SUPFAM" id="SSF52317">
    <property type="entry name" value="Class I glutamine amidotransferase-like"/>
    <property type="match status" value="1"/>
</dbReference>
<dbReference type="PROSITE" id="PS51273">
    <property type="entry name" value="GATASE_TYPE_1"/>
    <property type="match status" value="1"/>
</dbReference>
<comment type="function">
    <text evidence="1">Part of the phosphoribosylformylglycinamidine synthase complex involved in the purines biosynthetic pathway. Catalyzes the ATP-dependent conversion of formylglycinamide ribonucleotide (FGAR) and glutamine to yield formylglycinamidine ribonucleotide (FGAM) and glutamate. The FGAM synthase complex is composed of three subunits. PurQ produces an ammonia molecule by converting glutamine to glutamate. PurL transfers the ammonia molecule to FGAR to form FGAM in an ATP-dependent manner. PurS interacts with PurQ and PurL and is thought to assist in the transfer of the ammonia molecule from PurQ to PurL.</text>
</comment>
<comment type="catalytic activity">
    <reaction evidence="1">
        <text>N(2)-formyl-N(1)-(5-phospho-beta-D-ribosyl)glycinamide + L-glutamine + ATP + H2O = 2-formamido-N(1)-(5-O-phospho-beta-D-ribosyl)acetamidine + L-glutamate + ADP + phosphate + H(+)</text>
        <dbReference type="Rhea" id="RHEA:17129"/>
        <dbReference type="ChEBI" id="CHEBI:15377"/>
        <dbReference type="ChEBI" id="CHEBI:15378"/>
        <dbReference type="ChEBI" id="CHEBI:29985"/>
        <dbReference type="ChEBI" id="CHEBI:30616"/>
        <dbReference type="ChEBI" id="CHEBI:43474"/>
        <dbReference type="ChEBI" id="CHEBI:58359"/>
        <dbReference type="ChEBI" id="CHEBI:147286"/>
        <dbReference type="ChEBI" id="CHEBI:147287"/>
        <dbReference type="ChEBI" id="CHEBI:456216"/>
        <dbReference type="EC" id="6.3.5.3"/>
    </reaction>
</comment>
<comment type="catalytic activity">
    <reaction evidence="1">
        <text>L-glutamine + H2O = L-glutamate + NH4(+)</text>
        <dbReference type="Rhea" id="RHEA:15889"/>
        <dbReference type="ChEBI" id="CHEBI:15377"/>
        <dbReference type="ChEBI" id="CHEBI:28938"/>
        <dbReference type="ChEBI" id="CHEBI:29985"/>
        <dbReference type="ChEBI" id="CHEBI:58359"/>
        <dbReference type="EC" id="3.5.1.2"/>
    </reaction>
</comment>
<comment type="pathway">
    <text evidence="1">Purine metabolism; IMP biosynthesis via de novo pathway; 5-amino-1-(5-phospho-D-ribosyl)imidazole from N(2)-formyl-N(1)-(5-phospho-D-ribosyl)glycinamide: step 1/2.</text>
</comment>
<comment type="subunit">
    <text evidence="1">Part of the FGAM synthase complex composed of 1 PurL, 1 PurQ and 2 PurS subunits.</text>
</comment>
<comment type="subcellular location">
    <subcellularLocation>
        <location evidence="1">Cytoplasm</location>
    </subcellularLocation>
</comment>
<evidence type="ECO:0000255" key="1">
    <source>
        <dbReference type="HAMAP-Rule" id="MF_00421"/>
    </source>
</evidence>
<accession>P9WHL5</accession>
<accession>L0T4W8</accession>
<accession>P65902</accession>
<accession>P71841</accession>